<comment type="catalytic activity">
    <reaction evidence="1">
        <text>tRNA(Phe) + L-phenylalanine + ATP = L-phenylalanyl-tRNA(Phe) + AMP + diphosphate + H(+)</text>
        <dbReference type="Rhea" id="RHEA:19413"/>
        <dbReference type="Rhea" id="RHEA-COMP:9668"/>
        <dbReference type="Rhea" id="RHEA-COMP:9699"/>
        <dbReference type="ChEBI" id="CHEBI:15378"/>
        <dbReference type="ChEBI" id="CHEBI:30616"/>
        <dbReference type="ChEBI" id="CHEBI:33019"/>
        <dbReference type="ChEBI" id="CHEBI:58095"/>
        <dbReference type="ChEBI" id="CHEBI:78442"/>
        <dbReference type="ChEBI" id="CHEBI:78531"/>
        <dbReference type="ChEBI" id="CHEBI:456215"/>
        <dbReference type="EC" id="6.1.1.20"/>
    </reaction>
</comment>
<comment type="cofactor">
    <cofactor evidence="1">
        <name>Mg(2+)</name>
        <dbReference type="ChEBI" id="CHEBI:18420"/>
    </cofactor>
    <text evidence="1">Binds 2 magnesium ions per tetramer.</text>
</comment>
<comment type="subunit">
    <text evidence="1">Tetramer of two alpha and two beta subunits.</text>
</comment>
<comment type="subcellular location">
    <subcellularLocation>
        <location evidence="1">Cytoplasm</location>
    </subcellularLocation>
</comment>
<comment type="similarity">
    <text evidence="1">Belongs to the phenylalanyl-tRNA synthetase beta subunit family. Type 1 subfamily.</text>
</comment>
<sequence>MRFTLSWLMQYLDTDASLDFIISKLSDIGLEVDSVDCKKHLQSFVVVEVIDVVPHHAADKLKVCQVYDGVQTFQVVCGASNVKVGMKSVLAYVGSVIPKNQTVIKVAKLRGVDSYGMLCSRDELGIAENDSTDEGIIELSDNTYNVGESFFSCDPVIELNITPNRGDCLGVYGIARDLAAAGVGKLKSVNFCDITFDNTCYISPIEICLEVQGIVKGVYIKGIRNCETPKWLKEYLFSCGVKSISCVVDIINYIMLSFNRPLHIYDADKIAGKLVFRKIDDQIEFFALNDKKYLLGKENIIAVDLANRIHSIVGVIGSEYSKCLFDTENIFLECAWFDPVDIALSSRKIKLSTDSSYRLERFVDPEFLQDGLKLATKMILEYCGGSPSSIVSVQNYVHNDILLNFSPDSVRNIGSVSITRDEIFDFLCNIGCVVKNHDCDIWIVIPPSWRSDLKHSFDLVEEVLRLYGYDKILENPIPISNIEFPDNLHNKLRSVLLSQGMTEVVTWSFTNLEFAKKFGYDSDIMLIDNPINNNMNLMRPSVLLNLLQVISENQAYGNNDAAIFEIGQIYNINSVCGDNNYVVSGVRYGDNLPRNFYKTDRSVDIFDVKSDFFKVLQEMNIGYDSVDLVRSTKSYLHPMKSADVYFNNILIGYFGELHPSIVHLYEIKRPIVCFEVFLYKIPVVDLTRKEFVELRYQSVKRDFAFLVSKNVNIQCLIEVAKKTNVQLIEDVSIFDIYEGNGIDKGMLSVALSVTFRSVDHTLNDQEIKDASDLIISAISKGFNGILRSC</sequence>
<reference key="1">
    <citation type="journal article" date="2005" name="Proc. Natl. Acad. Sci. U.S.A.">
        <title>The genome of the heartwater agent Ehrlichia ruminantium contains multiple tandem repeats of actively variable copy number.</title>
        <authorList>
            <person name="Collins N.E."/>
            <person name="Liebenberg J."/>
            <person name="de Villiers E.P."/>
            <person name="Brayton K.A."/>
            <person name="Louw E."/>
            <person name="Pretorius A."/>
            <person name="Faber F.E."/>
            <person name="van Heerden H."/>
            <person name="Josemans A."/>
            <person name="van Kleef M."/>
            <person name="Steyn H.C."/>
            <person name="van Strijp M.F."/>
            <person name="Zweygarth E."/>
            <person name="Jongejan F."/>
            <person name="Maillard J.C."/>
            <person name="Berthier D."/>
            <person name="Botha M."/>
            <person name="Joubert F."/>
            <person name="Corton C.H."/>
            <person name="Thomson N.R."/>
            <person name="Allsopp M.T."/>
            <person name="Allsopp B.A."/>
        </authorList>
    </citation>
    <scope>NUCLEOTIDE SEQUENCE [LARGE SCALE GENOMIC DNA]</scope>
    <source>
        <strain>Welgevonden</strain>
    </source>
</reference>
<reference key="2">
    <citation type="journal article" date="2006" name="J. Bacteriol.">
        <title>Comparative genomic analysis of three strains of Ehrlichia ruminantium reveals an active process of genome size plasticity.</title>
        <authorList>
            <person name="Frutos R."/>
            <person name="Viari A."/>
            <person name="Ferraz C."/>
            <person name="Morgat A."/>
            <person name="Eychenie S."/>
            <person name="Kandassamy Y."/>
            <person name="Chantal I."/>
            <person name="Bensaid A."/>
            <person name="Coissac E."/>
            <person name="Vachiery N."/>
            <person name="Demaille J."/>
            <person name="Martinez D."/>
        </authorList>
    </citation>
    <scope>NUCLEOTIDE SEQUENCE [LARGE SCALE GENOMIC DNA]</scope>
    <source>
        <strain>Welgevonden</strain>
    </source>
</reference>
<keyword id="KW-0030">Aminoacyl-tRNA synthetase</keyword>
<keyword id="KW-0067">ATP-binding</keyword>
<keyword id="KW-0963">Cytoplasm</keyword>
<keyword id="KW-0436">Ligase</keyword>
<keyword id="KW-0460">Magnesium</keyword>
<keyword id="KW-0479">Metal-binding</keyword>
<keyword id="KW-0547">Nucleotide-binding</keyword>
<keyword id="KW-0648">Protein biosynthesis</keyword>
<keyword id="KW-0694">RNA-binding</keyword>
<keyword id="KW-0820">tRNA-binding</keyword>
<proteinExistence type="inferred from homology"/>
<protein>
    <recommendedName>
        <fullName evidence="1">Phenylalanine--tRNA ligase beta subunit</fullName>
        <ecNumber evidence="1">6.1.1.20</ecNumber>
    </recommendedName>
    <alternativeName>
        <fullName evidence="1">Phenylalanyl-tRNA synthetase beta subunit</fullName>
        <shortName evidence="1">PheRS</shortName>
    </alternativeName>
</protein>
<organism>
    <name type="scientific">Ehrlichia ruminantium (strain Welgevonden)</name>
    <dbReference type="NCBI Taxonomy" id="254945"/>
    <lineage>
        <taxon>Bacteria</taxon>
        <taxon>Pseudomonadati</taxon>
        <taxon>Pseudomonadota</taxon>
        <taxon>Alphaproteobacteria</taxon>
        <taxon>Rickettsiales</taxon>
        <taxon>Anaplasmataceae</taxon>
        <taxon>Ehrlichia</taxon>
    </lineage>
</organism>
<feature type="chain" id="PRO_0000232063" description="Phenylalanine--tRNA ligase beta subunit">
    <location>
        <begin position="1"/>
        <end position="789"/>
    </location>
</feature>
<feature type="domain" description="tRNA-binding" evidence="1">
    <location>
        <begin position="38"/>
        <end position="151"/>
    </location>
</feature>
<feature type="domain" description="B5" evidence="1">
    <location>
        <begin position="398"/>
        <end position="474"/>
    </location>
</feature>
<feature type="domain" description="FDX-ACB" evidence="1">
    <location>
        <begin position="694"/>
        <end position="787"/>
    </location>
</feature>
<feature type="binding site" evidence="1">
    <location>
        <position position="452"/>
    </location>
    <ligand>
        <name>Mg(2+)</name>
        <dbReference type="ChEBI" id="CHEBI:18420"/>
        <note>shared with alpha subunit</note>
    </ligand>
</feature>
<feature type="binding site" evidence="1">
    <location>
        <position position="458"/>
    </location>
    <ligand>
        <name>Mg(2+)</name>
        <dbReference type="ChEBI" id="CHEBI:18420"/>
        <note>shared with alpha subunit</note>
    </ligand>
</feature>
<feature type="binding site" evidence="1">
    <location>
        <position position="461"/>
    </location>
    <ligand>
        <name>Mg(2+)</name>
        <dbReference type="ChEBI" id="CHEBI:18420"/>
        <note>shared with alpha subunit</note>
    </ligand>
</feature>
<feature type="binding site" evidence="1">
    <location>
        <position position="462"/>
    </location>
    <ligand>
        <name>Mg(2+)</name>
        <dbReference type="ChEBI" id="CHEBI:18420"/>
        <note>shared with alpha subunit</note>
    </ligand>
</feature>
<accession>Q5HAU7</accession>
<accession>Q5FD40</accession>
<gene>
    <name evidence="1" type="primary">pheT</name>
    <name type="ordered locus">Erum5830</name>
    <name type="ordered locus">ERWE_CDS_06130</name>
</gene>
<dbReference type="EC" id="6.1.1.20" evidence="1"/>
<dbReference type="EMBL" id="CR767821">
    <property type="protein sequence ID" value="CAH58314.1"/>
    <property type="molecule type" value="Genomic_DNA"/>
</dbReference>
<dbReference type="EMBL" id="CR925678">
    <property type="protein sequence ID" value="CAI27107.1"/>
    <property type="molecule type" value="Genomic_DNA"/>
</dbReference>
<dbReference type="RefSeq" id="WP_011155264.1">
    <property type="nucleotide sequence ID" value="NC_005295.2"/>
</dbReference>
<dbReference type="SMR" id="Q5HAU7"/>
<dbReference type="GeneID" id="33057631"/>
<dbReference type="KEGG" id="eru:Erum5830"/>
<dbReference type="KEGG" id="erw:ERWE_CDS_06130"/>
<dbReference type="eggNOG" id="COG0072">
    <property type="taxonomic scope" value="Bacteria"/>
</dbReference>
<dbReference type="eggNOG" id="COG0073">
    <property type="taxonomic scope" value="Bacteria"/>
</dbReference>
<dbReference type="HOGENOM" id="CLU_016891_0_0_5"/>
<dbReference type="Proteomes" id="UP000001021">
    <property type="component" value="Chromosome"/>
</dbReference>
<dbReference type="GO" id="GO:0009328">
    <property type="term" value="C:phenylalanine-tRNA ligase complex"/>
    <property type="evidence" value="ECO:0007669"/>
    <property type="project" value="TreeGrafter"/>
</dbReference>
<dbReference type="GO" id="GO:0005524">
    <property type="term" value="F:ATP binding"/>
    <property type="evidence" value="ECO:0007669"/>
    <property type="project" value="UniProtKB-UniRule"/>
</dbReference>
<dbReference type="GO" id="GO:0000287">
    <property type="term" value="F:magnesium ion binding"/>
    <property type="evidence" value="ECO:0007669"/>
    <property type="project" value="UniProtKB-UniRule"/>
</dbReference>
<dbReference type="GO" id="GO:0004826">
    <property type="term" value="F:phenylalanine-tRNA ligase activity"/>
    <property type="evidence" value="ECO:0007669"/>
    <property type="project" value="UniProtKB-UniRule"/>
</dbReference>
<dbReference type="GO" id="GO:0000049">
    <property type="term" value="F:tRNA binding"/>
    <property type="evidence" value="ECO:0007669"/>
    <property type="project" value="UniProtKB-KW"/>
</dbReference>
<dbReference type="GO" id="GO:0006432">
    <property type="term" value="P:phenylalanyl-tRNA aminoacylation"/>
    <property type="evidence" value="ECO:0007669"/>
    <property type="project" value="UniProtKB-UniRule"/>
</dbReference>
<dbReference type="CDD" id="cd00769">
    <property type="entry name" value="PheRS_beta_core"/>
    <property type="match status" value="1"/>
</dbReference>
<dbReference type="CDD" id="cd02796">
    <property type="entry name" value="tRNA_bind_bactPheRS"/>
    <property type="match status" value="1"/>
</dbReference>
<dbReference type="Gene3D" id="3.30.56.10">
    <property type="match status" value="2"/>
</dbReference>
<dbReference type="Gene3D" id="3.30.930.10">
    <property type="entry name" value="Bira Bifunctional Protein, Domain 2"/>
    <property type="match status" value="1"/>
</dbReference>
<dbReference type="Gene3D" id="3.30.70.380">
    <property type="entry name" value="Ferrodoxin-fold anticodon-binding domain"/>
    <property type="match status" value="1"/>
</dbReference>
<dbReference type="Gene3D" id="2.40.50.140">
    <property type="entry name" value="Nucleic acid-binding proteins"/>
    <property type="match status" value="1"/>
</dbReference>
<dbReference type="Gene3D" id="3.50.40.10">
    <property type="entry name" value="Phenylalanyl-trna Synthetase, Chain B, domain 3"/>
    <property type="match status" value="1"/>
</dbReference>
<dbReference type="HAMAP" id="MF_00283">
    <property type="entry name" value="Phe_tRNA_synth_beta1"/>
    <property type="match status" value="1"/>
</dbReference>
<dbReference type="InterPro" id="IPR045864">
    <property type="entry name" value="aa-tRNA-synth_II/BPL/LPL"/>
</dbReference>
<dbReference type="InterPro" id="IPR005146">
    <property type="entry name" value="B3/B4_tRNA-bd"/>
</dbReference>
<dbReference type="InterPro" id="IPR009061">
    <property type="entry name" value="DNA-bd_dom_put_sf"/>
</dbReference>
<dbReference type="InterPro" id="IPR005121">
    <property type="entry name" value="Fdx_antiC-bd"/>
</dbReference>
<dbReference type="InterPro" id="IPR036690">
    <property type="entry name" value="Fdx_antiC-bd_sf"/>
</dbReference>
<dbReference type="InterPro" id="IPR012340">
    <property type="entry name" value="NA-bd_OB-fold"/>
</dbReference>
<dbReference type="InterPro" id="IPR045060">
    <property type="entry name" value="Phe-tRNA-ligase_IIc_bsu"/>
</dbReference>
<dbReference type="InterPro" id="IPR004532">
    <property type="entry name" value="Phe-tRNA-ligase_IIc_bsu_bact"/>
</dbReference>
<dbReference type="InterPro" id="IPR020825">
    <property type="entry name" value="Phe-tRNA_synthase-like_B3/B4"/>
</dbReference>
<dbReference type="InterPro" id="IPR041616">
    <property type="entry name" value="PheRS_beta_core"/>
</dbReference>
<dbReference type="InterPro" id="IPR002547">
    <property type="entry name" value="tRNA-bd_dom"/>
</dbReference>
<dbReference type="InterPro" id="IPR033714">
    <property type="entry name" value="tRNA_bind_bactPheRS"/>
</dbReference>
<dbReference type="InterPro" id="IPR005147">
    <property type="entry name" value="tRNA_synthase_B5-dom"/>
</dbReference>
<dbReference type="NCBIfam" id="TIGR00472">
    <property type="entry name" value="pheT_bact"/>
    <property type="match status" value="1"/>
</dbReference>
<dbReference type="NCBIfam" id="NF045760">
    <property type="entry name" value="YtpR"/>
    <property type="match status" value="1"/>
</dbReference>
<dbReference type="PANTHER" id="PTHR10947:SF0">
    <property type="entry name" value="PHENYLALANINE--TRNA LIGASE BETA SUBUNIT"/>
    <property type="match status" value="1"/>
</dbReference>
<dbReference type="PANTHER" id="PTHR10947">
    <property type="entry name" value="PHENYLALANYL-TRNA SYNTHETASE BETA CHAIN AND LEUCINE-RICH REPEAT-CONTAINING PROTEIN 47"/>
    <property type="match status" value="1"/>
</dbReference>
<dbReference type="Pfam" id="PF03483">
    <property type="entry name" value="B3_4"/>
    <property type="match status" value="1"/>
</dbReference>
<dbReference type="Pfam" id="PF03484">
    <property type="entry name" value="B5"/>
    <property type="match status" value="1"/>
</dbReference>
<dbReference type="Pfam" id="PF03147">
    <property type="entry name" value="FDX-ACB"/>
    <property type="match status" value="1"/>
</dbReference>
<dbReference type="Pfam" id="PF01588">
    <property type="entry name" value="tRNA_bind"/>
    <property type="match status" value="1"/>
</dbReference>
<dbReference type="Pfam" id="PF17759">
    <property type="entry name" value="tRNA_synthFbeta"/>
    <property type="match status" value="1"/>
</dbReference>
<dbReference type="SMART" id="SM00873">
    <property type="entry name" value="B3_4"/>
    <property type="match status" value="1"/>
</dbReference>
<dbReference type="SMART" id="SM00874">
    <property type="entry name" value="B5"/>
    <property type="match status" value="1"/>
</dbReference>
<dbReference type="SMART" id="SM00896">
    <property type="entry name" value="FDX-ACB"/>
    <property type="match status" value="1"/>
</dbReference>
<dbReference type="SUPFAM" id="SSF54991">
    <property type="entry name" value="Anticodon-binding domain of PheRS"/>
    <property type="match status" value="1"/>
</dbReference>
<dbReference type="SUPFAM" id="SSF55681">
    <property type="entry name" value="Class II aaRS and biotin synthetases"/>
    <property type="match status" value="1"/>
</dbReference>
<dbReference type="SUPFAM" id="SSF50249">
    <property type="entry name" value="Nucleic acid-binding proteins"/>
    <property type="match status" value="1"/>
</dbReference>
<dbReference type="SUPFAM" id="SSF56037">
    <property type="entry name" value="PheT/TilS domain"/>
    <property type="match status" value="1"/>
</dbReference>
<dbReference type="SUPFAM" id="SSF46955">
    <property type="entry name" value="Putative DNA-binding domain"/>
    <property type="match status" value="1"/>
</dbReference>
<dbReference type="PROSITE" id="PS51483">
    <property type="entry name" value="B5"/>
    <property type="match status" value="1"/>
</dbReference>
<dbReference type="PROSITE" id="PS51447">
    <property type="entry name" value="FDX_ACB"/>
    <property type="match status" value="1"/>
</dbReference>
<dbReference type="PROSITE" id="PS50886">
    <property type="entry name" value="TRBD"/>
    <property type="match status" value="1"/>
</dbReference>
<name>SYFB_EHRRW</name>
<evidence type="ECO:0000255" key="1">
    <source>
        <dbReference type="HAMAP-Rule" id="MF_00283"/>
    </source>
</evidence>